<feature type="chain" id="PRO_0000313979" description="tRNA U34 carboxymethyltransferase">
    <location>
        <begin position="1"/>
        <end position="323"/>
    </location>
</feature>
<feature type="binding site" evidence="1">
    <location>
        <position position="91"/>
    </location>
    <ligand>
        <name>carboxy-S-adenosyl-L-methionine</name>
        <dbReference type="ChEBI" id="CHEBI:134278"/>
    </ligand>
</feature>
<feature type="binding site" evidence="1">
    <location>
        <position position="105"/>
    </location>
    <ligand>
        <name>carboxy-S-adenosyl-L-methionine</name>
        <dbReference type="ChEBI" id="CHEBI:134278"/>
    </ligand>
</feature>
<feature type="binding site" evidence="1">
    <location>
        <position position="110"/>
    </location>
    <ligand>
        <name>carboxy-S-adenosyl-L-methionine</name>
        <dbReference type="ChEBI" id="CHEBI:134278"/>
    </ligand>
</feature>
<feature type="binding site" evidence="1">
    <location>
        <position position="130"/>
    </location>
    <ligand>
        <name>carboxy-S-adenosyl-L-methionine</name>
        <dbReference type="ChEBI" id="CHEBI:134278"/>
    </ligand>
</feature>
<feature type="binding site" evidence="1">
    <location>
        <begin position="152"/>
        <end position="154"/>
    </location>
    <ligand>
        <name>carboxy-S-adenosyl-L-methionine</name>
        <dbReference type="ChEBI" id="CHEBI:134278"/>
    </ligand>
</feature>
<feature type="binding site" evidence="1">
    <location>
        <begin position="181"/>
        <end position="182"/>
    </location>
    <ligand>
        <name>carboxy-S-adenosyl-L-methionine</name>
        <dbReference type="ChEBI" id="CHEBI:134278"/>
    </ligand>
</feature>
<feature type="binding site" evidence="1">
    <location>
        <position position="196"/>
    </location>
    <ligand>
        <name>carboxy-S-adenosyl-L-methionine</name>
        <dbReference type="ChEBI" id="CHEBI:134278"/>
    </ligand>
</feature>
<feature type="binding site" evidence="1">
    <location>
        <position position="200"/>
    </location>
    <ligand>
        <name>carboxy-S-adenosyl-L-methionine</name>
        <dbReference type="ChEBI" id="CHEBI:134278"/>
    </ligand>
</feature>
<feature type="binding site" evidence="1">
    <location>
        <position position="315"/>
    </location>
    <ligand>
        <name>carboxy-S-adenosyl-L-methionine</name>
        <dbReference type="ChEBI" id="CHEBI:134278"/>
    </ligand>
</feature>
<gene>
    <name evidence="1" type="primary">cmoB</name>
    <name type="ordered locus">SSON_1249</name>
</gene>
<accession>Q3Z2P7</accession>
<comment type="function">
    <text evidence="1">Catalyzes carboxymethyl transfer from carboxy-S-adenosyl-L-methionine (Cx-SAM) to 5-hydroxyuridine (ho5U) to form 5-carboxymethoxyuridine (cmo5U) at position 34 in tRNAs.</text>
</comment>
<comment type="catalytic activity">
    <reaction evidence="1">
        <text>carboxy-S-adenosyl-L-methionine + 5-hydroxyuridine(34) in tRNA = 5-carboxymethoxyuridine(34) in tRNA + S-adenosyl-L-homocysteine + H(+)</text>
        <dbReference type="Rhea" id="RHEA:52848"/>
        <dbReference type="Rhea" id="RHEA-COMP:13381"/>
        <dbReference type="Rhea" id="RHEA-COMP:13383"/>
        <dbReference type="ChEBI" id="CHEBI:15378"/>
        <dbReference type="ChEBI" id="CHEBI:57856"/>
        <dbReference type="ChEBI" id="CHEBI:134278"/>
        <dbReference type="ChEBI" id="CHEBI:136877"/>
        <dbReference type="ChEBI" id="CHEBI:136879"/>
    </reaction>
</comment>
<comment type="subunit">
    <text evidence="1">Homotetramer.</text>
</comment>
<comment type="similarity">
    <text evidence="1">Belongs to the class I-like SAM-binding methyltransferase superfamily. CmoB family.</text>
</comment>
<evidence type="ECO:0000255" key="1">
    <source>
        <dbReference type="HAMAP-Rule" id="MF_01590"/>
    </source>
</evidence>
<keyword id="KW-1185">Reference proteome</keyword>
<keyword id="KW-0808">Transferase</keyword>
<keyword id="KW-0819">tRNA processing</keyword>
<dbReference type="EC" id="2.5.1.-" evidence="1"/>
<dbReference type="EMBL" id="CP000038">
    <property type="protein sequence ID" value="AAZ87965.1"/>
    <property type="molecule type" value="Genomic_DNA"/>
</dbReference>
<dbReference type="RefSeq" id="WP_000564745.1">
    <property type="nucleotide sequence ID" value="NC_007384.1"/>
</dbReference>
<dbReference type="SMR" id="Q3Z2P7"/>
<dbReference type="GeneID" id="93776172"/>
<dbReference type="KEGG" id="ssn:SSON_1249"/>
<dbReference type="HOGENOM" id="CLU_052665_0_0_6"/>
<dbReference type="Proteomes" id="UP000002529">
    <property type="component" value="Chromosome"/>
</dbReference>
<dbReference type="GO" id="GO:0016765">
    <property type="term" value="F:transferase activity, transferring alkyl or aryl (other than methyl) groups"/>
    <property type="evidence" value="ECO:0007669"/>
    <property type="project" value="UniProtKB-UniRule"/>
</dbReference>
<dbReference type="GO" id="GO:0002098">
    <property type="term" value="P:tRNA wobble uridine modification"/>
    <property type="evidence" value="ECO:0007669"/>
    <property type="project" value="InterPro"/>
</dbReference>
<dbReference type="CDD" id="cd02440">
    <property type="entry name" value="AdoMet_MTases"/>
    <property type="match status" value="1"/>
</dbReference>
<dbReference type="FunFam" id="3.40.50.150:FF:000080">
    <property type="entry name" value="tRNA U34 carboxymethyltransferase"/>
    <property type="match status" value="1"/>
</dbReference>
<dbReference type="Gene3D" id="3.40.50.150">
    <property type="entry name" value="Vaccinia Virus protein VP39"/>
    <property type="match status" value="1"/>
</dbReference>
<dbReference type="HAMAP" id="MF_01590">
    <property type="entry name" value="tRNA_carboxymethyltr_CmoB"/>
    <property type="match status" value="1"/>
</dbReference>
<dbReference type="InterPro" id="IPR010017">
    <property type="entry name" value="CmoB"/>
</dbReference>
<dbReference type="InterPro" id="IPR027555">
    <property type="entry name" value="Mo5U34_MeTrfas-like"/>
</dbReference>
<dbReference type="InterPro" id="IPR029063">
    <property type="entry name" value="SAM-dependent_MTases_sf"/>
</dbReference>
<dbReference type="NCBIfam" id="NF011650">
    <property type="entry name" value="PRK15068.1"/>
    <property type="match status" value="1"/>
</dbReference>
<dbReference type="NCBIfam" id="TIGR00452">
    <property type="entry name" value="tRNA 5-methoxyuridine(34)/uridine 5-oxyacetic acid(34) synthase CmoB"/>
    <property type="match status" value="1"/>
</dbReference>
<dbReference type="PANTHER" id="PTHR43861:SF3">
    <property type="entry name" value="PUTATIVE (AFU_ORTHOLOGUE AFUA_2G14390)-RELATED"/>
    <property type="match status" value="1"/>
</dbReference>
<dbReference type="PANTHER" id="PTHR43861">
    <property type="entry name" value="TRANS-ACONITATE 2-METHYLTRANSFERASE-RELATED"/>
    <property type="match status" value="1"/>
</dbReference>
<dbReference type="Pfam" id="PF08003">
    <property type="entry name" value="Methyltransf_9"/>
    <property type="match status" value="1"/>
</dbReference>
<dbReference type="SUPFAM" id="SSF53335">
    <property type="entry name" value="S-adenosyl-L-methionine-dependent methyltransferases"/>
    <property type="match status" value="1"/>
</dbReference>
<sequence>MIDFGNFYSLIAKNHLSHWLETLPAQIANWQREQQHGLFKQWSNAVEFLPEIKPYRLDLLHSVTAESEEPLSTGQIKRIETLMRNLMPWRKGPFSLYGVNIDTEWRSDWKWDRVLPHLSDLTGRTILDVGCGSGYHMWRMIGAGAHLAVGIDPTQLFLCQFEAVRKLLGNDQRAHLLPLGIEQLPALKAFDTVFSMGVLYHRRSPLEHLWQLKDQLVNEGELVLETLVIDGDENTVLVPGDRYAQMRNVYFIPSALALKNWLKKCGFVDIRIVDVCVTTTEEQRRTEWMVTESLSDFLDPHDPSKTVEGYPAPKRAVLIARKP</sequence>
<name>CMOB_SHISS</name>
<protein>
    <recommendedName>
        <fullName evidence="1">tRNA U34 carboxymethyltransferase</fullName>
        <ecNumber evidence="1">2.5.1.-</ecNumber>
    </recommendedName>
</protein>
<proteinExistence type="inferred from homology"/>
<organism>
    <name type="scientific">Shigella sonnei (strain Ss046)</name>
    <dbReference type="NCBI Taxonomy" id="300269"/>
    <lineage>
        <taxon>Bacteria</taxon>
        <taxon>Pseudomonadati</taxon>
        <taxon>Pseudomonadota</taxon>
        <taxon>Gammaproteobacteria</taxon>
        <taxon>Enterobacterales</taxon>
        <taxon>Enterobacteriaceae</taxon>
        <taxon>Shigella</taxon>
    </lineage>
</organism>
<reference key="1">
    <citation type="journal article" date="2005" name="Nucleic Acids Res.">
        <title>Genome dynamics and diversity of Shigella species, the etiologic agents of bacillary dysentery.</title>
        <authorList>
            <person name="Yang F."/>
            <person name="Yang J."/>
            <person name="Zhang X."/>
            <person name="Chen L."/>
            <person name="Jiang Y."/>
            <person name="Yan Y."/>
            <person name="Tang X."/>
            <person name="Wang J."/>
            <person name="Xiong Z."/>
            <person name="Dong J."/>
            <person name="Xue Y."/>
            <person name="Zhu Y."/>
            <person name="Xu X."/>
            <person name="Sun L."/>
            <person name="Chen S."/>
            <person name="Nie H."/>
            <person name="Peng J."/>
            <person name="Xu J."/>
            <person name="Wang Y."/>
            <person name="Yuan Z."/>
            <person name="Wen Y."/>
            <person name="Yao Z."/>
            <person name="Shen Y."/>
            <person name="Qiang B."/>
            <person name="Hou Y."/>
            <person name="Yu J."/>
            <person name="Jin Q."/>
        </authorList>
    </citation>
    <scope>NUCLEOTIDE SEQUENCE [LARGE SCALE GENOMIC DNA]</scope>
    <source>
        <strain>Ss046</strain>
    </source>
</reference>